<feature type="chain" id="PRO_0000233947" description="Photoactivated adenylate cyclase subunit beta">
    <location>
        <begin position="1"/>
        <end position="860"/>
    </location>
</feature>
<feature type="domain" description="BLUF 1" evidence="2">
    <location>
        <begin position="56"/>
        <end position="149"/>
    </location>
</feature>
<feature type="domain" description="Guanylate cyclase 1" evidence="3">
    <location>
        <begin position="205"/>
        <end position="333"/>
    </location>
</feature>
<feature type="domain" description="BLUF 2" evidence="2">
    <location>
        <begin position="471"/>
        <end position="563"/>
    </location>
</feature>
<feature type="domain" description="Guanylate cyclase 2" evidence="3">
    <location>
        <begin position="619"/>
        <end position="748"/>
    </location>
</feature>
<feature type="region of interest" description="Disordered" evidence="4">
    <location>
        <begin position="420"/>
        <end position="443"/>
    </location>
</feature>
<feature type="region of interest" description="Disordered" evidence="4">
    <location>
        <begin position="819"/>
        <end position="860"/>
    </location>
</feature>
<feature type="compositionally biased region" description="Polar residues" evidence="4">
    <location>
        <begin position="847"/>
        <end position="860"/>
    </location>
</feature>
<organism>
    <name type="scientific">Euglena longa</name>
    <name type="common">Euglenophycean alga</name>
    <name type="synonym">Astasia longa</name>
    <dbReference type="NCBI Taxonomy" id="3037"/>
    <lineage>
        <taxon>Eukaryota</taxon>
        <taxon>Discoba</taxon>
        <taxon>Euglenozoa</taxon>
        <taxon>Euglenida</taxon>
        <taxon>Spirocuta</taxon>
        <taxon>Euglenophyceae</taxon>
        <taxon>Euglenales</taxon>
        <taxon>Euglenaceae</taxon>
        <taxon>Euglena</taxon>
    </lineage>
</organism>
<gene>
    <name evidence="7" type="primary">pacB</name>
</gene>
<keyword id="KW-0067">ATP-binding</keyword>
<keyword id="KW-0115">cAMP biosynthesis</keyword>
<keyword id="KW-0966">Cell projection</keyword>
<keyword id="KW-0157">Chromophore</keyword>
<keyword id="KW-0969">Cilium</keyword>
<keyword id="KW-0274">FAD</keyword>
<keyword id="KW-0282">Flagellum</keyword>
<keyword id="KW-0285">Flavoprotein</keyword>
<keyword id="KW-0456">Lyase</keyword>
<keyword id="KW-0547">Nucleotide-binding</keyword>
<keyword id="KW-0600">Photoreceptor protein</keyword>
<keyword id="KW-0675">Receptor</keyword>
<keyword id="KW-0677">Repeat</keyword>
<keyword id="KW-0716">Sensory transduction</keyword>
<reference evidence="8 9" key="1">
    <citation type="journal article" date="2003" name="Plant Physiol.">
        <title>Photoactivated adenylyl cyclase controls phototaxis in the flagellate Euglena gracilis.</title>
        <authorList>
            <person name="Ntefidou M."/>
            <person name="Iseki M."/>
            <person name="Watanabe M."/>
            <person name="Lebert M."/>
            <person name="Haeder D.-P."/>
        </authorList>
    </citation>
    <scope>NUCLEOTIDE SEQUENCE [MRNA]</scope>
    <scope>FUNCTION</scope>
</reference>
<reference evidence="8" key="2">
    <citation type="journal article" date="2005" name="Photochem. Photobiol. Sci.">
        <title>Photoactivated adenylyl cyclase (PAC) genes in the flagellate Euglena gracilis mutant strains.</title>
        <authorList>
            <person name="Ntefidou M."/>
            <person name="Haeder D.-P."/>
        </authorList>
    </citation>
    <scope>SUBCELLULAR LOCATION</scope>
</reference>
<accession>Q76L33</accession>
<comment type="function">
    <text evidence="5">Acts as a photoreceptor for the step-up photophobic response.</text>
</comment>
<comment type="catalytic activity">
    <reaction evidence="1">
        <text>ATP = 3',5'-cyclic AMP + diphosphate</text>
        <dbReference type="Rhea" id="RHEA:15389"/>
        <dbReference type="ChEBI" id="CHEBI:30616"/>
        <dbReference type="ChEBI" id="CHEBI:33019"/>
        <dbReference type="ChEBI" id="CHEBI:58165"/>
        <dbReference type="EC" id="4.6.1.1"/>
    </reaction>
</comment>
<comment type="cofactor">
    <cofactor evidence="1">
        <name>FAD</name>
        <dbReference type="ChEBI" id="CHEBI:57692"/>
    </cofactor>
</comment>
<comment type="subunit">
    <text evidence="1">Heterotetramer of two alpha and two beta subunits.</text>
</comment>
<comment type="subcellular location">
    <subcellularLocation>
        <location evidence="6">Cell projection</location>
        <location evidence="6">Cilium</location>
        <location evidence="6">Flagellum</location>
    </subcellularLocation>
</comment>
<comment type="similarity">
    <text evidence="3">Belongs to the adenylyl cyclase class-4/guanylyl cyclase family.</text>
</comment>
<evidence type="ECO:0000250" key="1">
    <source>
        <dbReference type="UniProtKB" id="Q8S9F1"/>
    </source>
</evidence>
<evidence type="ECO:0000255" key="2">
    <source>
        <dbReference type="PROSITE-ProRule" id="PRU00030"/>
    </source>
</evidence>
<evidence type="ECO:0000255" key="3">
    <source>
        <dbReference type="PROSITE-ProRule" id="PRU00099"/>
    </source>
</evidence>
<evidence type="ECO:0000256" key="4">
    <source>
        <dbReference type="SAM" id="MobiDB-lite"/>
    </source>
</evidence>
<evidence type="ECO:0000269" key="5">
    <source>
    </source>
</evidence>
<evidence type="ECO:0000269" key="6">
    <source>
    </source>
</evidence>
<evidence type="ECO:0000303" key="7">
    <source>
    </source>
</evidence>
<evidence type="ECO:0000305" key="8"/>
<evidence type="ECO:0000312" key="9">
    <source>
        <dbReference type="EMBL" id="BAD04849.1"/>
    </source>
</evidence>
<protein>
    <recommendedName>
        <fullName>Photoactivated adenylate cyclase subunit beta</fullName>
        <ecNumber>4.6.1.1</ecNumber>
    </recommendedName>
    <alternativeName>
        <fullName>Photoactivated adenylyl cyclase subunit beta</fullName>
    </alternativeName>
</protein>
<proteinExistence type="evidence at transcript level"/>
<dbReference type="EC" id="4.6.1.1"/>
<dbReference type="EMBL" id="AB085170">
    <property type="protein sequence ID" value="BAD04849.1"/>
    <property type="molecule type" value="mRNA"/>
</dbReference>
<dbReference type="SMR" id="Q76L33"/>
<dbReference type="GO" id="GO:0031514">
    <property type="term" value="C:motile cilium"/>
    <property type="evidence" value="ECO:0000314"/>
    <property type="project" value="UniProtKB"/>
</dbReference>
<dbReference type="GO" id="GO:0004016">
    <property type="term" value="F:adenylate cyclase activity"/>
    <property type="evidence" value="ECO:0000314"/>
    <property type="project" value="UniProtKB"/>
</dbReference>
<dbReference type="GO" id="GO:0005524">
    <property type="term" value="F:ATP binding"/>
    <property type="evidence" value="ECO:0007669"/>
    <property type="project" value="UniProtKB-KW"/>
</dbReference>
<dbReference type="GO" id="GO:0009882">
    <property type="term" value="F:blue light photoreceptor activity"/>
    <property type="evidence" value="ECO:0007669"/>
    <property type="project" value="InterPro"/>
</dbReference>
<dbReference type="GO" id="GO:0071949">
    <property type="term" value="F:FAD binding"/>
    <property type="evidence" value="ECO:0007669"/>
    <property type="project" value="InterPro"/>
</dbReference>
<dbReference type="GO" id="GO:0009881">
    <property type="term" value="F:photoreceptor activity"/>
    <property type="evidence" value="ECO:0000314"/>
    <property type="project" value="UniProtKB"/>
</dbReference>
<dbReference type="GO" id="GO:0006171">
    <property type="term" value="P:cAMP biosynthetic process"/>
    <property type="evidence" value="ECO:0007669"/>
    <property type="project" value="UniProtKB-KW"/>
</dbReference>
<dbReference type="CDD" id="cd07302">
    <property type="entry name" value="CHD"/>
    <property type="match status" value="2"/>
</dbReference>
<dbReference type="FunFam" id="3.30.70.1230:FF:000065">
    <property type="entry name" value="Photoactivated adenylate cyclase subunit alpha-like protein ST"/>
    <property type="match status" value="1"/>
</dbReference>
<dbReference type="FunFam" id="3.30.70.100:FF:000061">
    <property type="entry name" value="Photoactivated adenylate cyclase subunit beta-like protein 1224-5/1F"/>
    <property type="match status" value="1"/>
</dbReference>
<dbReference type="FunFam" id="3.30.70.1230:FF:000058">
    <property type="entry name" value="Photoactivated adenylate cyclase subunit beta-like protein FB"/>
    <property type="match status" value="1"/>
</dbReference>
<dbReference type="FunFam" id="3.30.70.100:FF:000064">
    <property type="entry name" value="Photoactivated adenylate cyclase subunit beta-like protein ST"/>
    <property type="match status" value="1"/>
</dbReference>
<dbReference type="Gene3D" id="3.30.70.100">
    <property type="match status" value="2"/>
</dbReference>
<dbReference type="Gene3D" id="3.30.70.1230">
    <property type="entry name" value="Nucleotide cyclase"/>
    <property type="match status" value="2"/>
</dbReference>
<dbReference type="InterPro" id="IPR001054">
    <property type="entry name" value="A/G_cyclase"/>
</dbReference>
<dbReference type="InterPro" id="IPR036046">
    <property type="entry name" value="Acylphosphatase-like_dom_sf"/>
</dbReference>
<dbReference type="InterPro" id="IPR050697">
    <property type="entry name" value="Adenylyl/Guanylyl_Cyclase_3/4"/>
</dbReference>
<dbReference type="InterPro" id="IPR007024">
    <property type="entry name" value="BLUF_domain"/>
</dbReference>
<dbReference type="InterPro" id="IPR029787">
    <property type="entry name" value="Nucleotide_cyclase"/>
</dbReference>
<dbReference type="PANTHER" id="PTHR43081:SF1">
    <property type="entry name" value="ADENYLATE CYCLASE, TERMINAL-DIFFERENTIATION SPECIFIC"/>
    <property type="match status" value="1"/>
</dbReference>
<dbReference type="PANTHER" id="PTHR43081">
    <property type="entry name" value="ADENYLATE CYCLASE, TERMINAL-DIFFERENTIATION SPECIFIC-RELATED"/>
    <property type="match status" value="1"/>
</dbReference>
<dbReference type="Pfam" id="PF04940">
    <property type="entry name" value="BLUF"/>
    <property type="match status" value="2"/>
</dbReference>
<dbReference type="SMART" id="SM01034">
    <property type="entry name" value="BLUF"/>
    <property type="match status" value="2"/>
</dbReference>
<dbReference type="SUPFAM" id="SSF54975">
    <property type="entry name" value="Acylphosphatase/BLUF domain-like"/>
    <property type="match status" value="2"/>
</dbReference>
<dbReference type="SUPFAM" id="SSF55073">
    <property type="entry name" value="Nucleotide cyclase"/>
    <property type="match status" value="2"/>
</dbReference>
<dbReference type="PROSITE" id="PS50925">
    <property type="entry name" value="BLUF"/>
    <property type="match status" value="2"/>
</dbReference>
<dbReference type="PROSITE" id="PS50125">
    <property type="entry name" value="GUANYLATE_CYCLASE_2"/>
    <property type="match status" value="2"/>
</dbReference>
<sequence>MYILVWKRGQQIKTFHTLDEAANFKAASNIDEAQMFSITVAPAISASGGSNEATNLRRLMYLSKSTNPEECNPQFLAEMARVATLRNREIGVSGFLMYSSPFFFQVIEGTDEDLDFLFAKISADPRHERCIVLANGPCTGRMYGDWHMKDSHIDSITTHPAMKTILYQIARSFSSMWSYLPKSAGNMLLLGKDPAAQPPEPMSVVVTFIYLVEFGSILSNPNLTEQAAEVLSTFVDVCVKNVEGSGGNIAKFITGICMAYWPINRTEDALNAIQQISEDLAQLRSQQAPGSAISLMYSQAGVHYGRAMLCNAGSRKSDFTLLGDCINTTSRIATLAKKLKTPLLFSFEVRCLLGDEMREEVEGAGMHQVKGRDKPVVVYQFPGPELDVEMVRQKIEHFTPGRFRCQMPVVEYESLPISQRPPIFDDTPKGKPRPRTPGYGGRQRSDSLVDRLIMIAKLAGPSISATGDSTLTTLTYISQATRPMSRLDLSAIMRTATRRNAQLSITGTLLYVNGLFVQTLEGPKDAMVNLYLKIRQDPRHTDVVTVHMAPIQERAYPAEWTLTSATEEMLATFPPLQDVLSQLAKSFTSLETYVPSTVVRYLTAGNNPRNLMPVSCGVVMLATDICSFTSLTEKSSLTEVWMICNTFIDACTSAICQEGGEVIKLIGDCVTAYFPGNGADSAVAAAQELFTFCRQLREAFVDVLDVRGCVSCGVGLDYGQVVMAQCGSLGLTEYVVAGAVSARVMEVESITREVGYAIVITEPVADRLSPQLRDHGIIPTPQAIEGLPCYGIAGEEFELDVDSIKRGIKALHAARSGEKPLALEPEEAKQDYRVSPGRMRHGDSGRRSNSAQGKRSTQVR</sequence>
<name>PCYAB_EUGLO</name>